<reference key="1">
    <citation type="journal article" date="2003" name="J. Bacteriol.">
        <title>Complete genome sequence of the ammonia-oxidizing bacterium and obligate chemolithoautotroph Nitrosomonas europaea.</title>
        <authorList>
            <person name="Chain P."/>
            <person name="Lamerdin J.E."/>
            <person name="Larimer F.W."/>
            <person name="Regala W."/>
            <person name="Lao V."/>
            <person name="Land M.L."/>
            <person name="Hauser L."/>
            <person name="Hooper A.B."/>
            <person name="Klotz M.G."/>
            <person name="Norton J."/>
            <person name="Sayavedra-Soto L.A."/>
            <person name="Arciero D.M."/>
            <person name="Hommes N.G."/>
            <person name="Whittaker M.M."/>
            <person name="Arp D.J."/>
        </authorList>
    </citation>
    <scope>NUCLEOTIDE SEQUENCE [LARGE SCALE GENOMIC DNA]</scope>
    <source>
        <strain>ATCC 19718 / CIP 103999 / KCTC 2705 / NBRC 14298</strain>
    </source>
</reference>
<protein>
    <recommendedName>
        <fullName evidence="1">23S rRNA (guanosine-2'-O-)-methyltransferase RlmB</fullName>
        <ecNumber evidence="1">2.1.1.185</ecNumber>
    </recommendedName>
    <alternativeName>
        <fullName evidence="1">23S rRNA (guanosine2251 2'-O)-methyltransferase</fullName>
    </alternativeName>
    <alternativeName>
        <fullName evidence="1">23S rRNA Gm2251 2'-O-methyltransferase</fullName>
    </alternativeName>
</protein>
<keyword id="KW-0963">Cytoplasm</keyword>
<keyword id="KW-0489">Methyltransferase</keyword>
<keyword id="KW-1185">Reference proteome</keyword>
<keyword id="KW-0698">rRNA processing</keyword>
<keyword id="KW-0949">S-adenosyl-L-methionine</keyword>
<keyword id="KW-0808">Transferase</keyword>
<dbReference type="EC" id="2.1.1.185" evidence="1"/>
<dbReference type="EMBL" id="AL954747">
    <property type="protein sequence ID" value="CAD84262.1"/>
    <property type="molecule type" value="Genomic_DNA"/>
</dbReference>
<dbReference type="RefSeq" id="WP_011110986.1">
    <property type="nucleotide sequence ID" value="NC_004757.1"/>
</dbReference>
<dbReference type="SMR" id="Q82XD1"/>
<dbReference type="STRING" id="228410.NE0351"/>
<dbReference type="GeneID" id="87103557"/>
<dbReference type="KEGG" id="neu:NE0351"/>
<dbReference type="eggNOG" id="COG0566">
    <property type="taxonomic scope" value="Bacteria"/>
</dbReference>
<dbReference type="HOGENOM" id="CLU_021322_0_1_4"/>
<dbReference type="OrthoDB" id="9785673at2"/>
<dbReference type="PhylomeDB" id="Q82XD1"/>
<dbReference type="Proteomes" id="UP000001416">
    <property type="component" value="Chromosome"/>
</dbReference>
<dbReference type="GO" id="GO:0005829">
    <property type="term" value="C:cytosol"/>
    <property type="evidence" value="ECO:0007669"/>
    <property type="project" value="TreeGrafter"/>
</dbReference>
<dbReference type="GO" id="GO:0003723">
    <property type="term" value="F:RNA binding"/>
    <property type="evidence" value="ECO:0007669"/>
    <property type="project" value="InterPro"/>
</dbReference>
<dbReference type="GO" id="GO:0070039">
    <property type="term" value="F:rRNA (guanosine-2'-O-)-methyltransferase activity"/>
    <property type="evidence" value="ECO:0007669"/>
    <property type="project" value="UniProtKB-UniRule"/>
</dbReference>
<dbReference type="CDD" id="cd18103">
    <property type="entry name" value="SpoU-like_RlmB"/>
    <property type="match status" value="1"/>
</dbReference>
<dbReference type="FunFam" id="3.40.1280.10:FF:000008">
    <property type="entry name" value="Group 3 RNA methyltransferase TrmH"/>
    <property type="match status" value="1"/>
</dbReference>
<dbReference type="Gene3D" id="3.30.1330.30">
    <property type="match status" value="1"/>
</dbReference>
<dbReference type="Gene3D" id="3.40.1280.10">
    <property type="match status" value="1"/>
</dbReference>
<dbReference type="HAMAP" id="MF_01887">
    <property type="entry name" value="23SrRNA_methyltr_B"/>
    <property type="match status" value="1"/>
</dbReference>
<dbReference type="InterPro" id="IPR024915">
    <property type="entry name" value="23S_rRNA_MeTrfase_RlmB"/>
</dbReference>
<dbReference type="InterPro" id="IPR029028">
    <property type="entry name" value="Alpha/beta_knot_MTases"/>
</dbReference>
<dbReference type="InterPro" id="IPR029064">
    <property type="entry name" value="Ribosomal_eL30-like_sf"/>
</dbReference>
<dbReference type="InterPro" id="IPR004441">
    <property type="entry name" value="rRNA_MeTrfase_TrmH"/>
</dbReference>
<dbReference type="InterPro" id="IPR001537">
    <property type="entry name" value="SpoU_MeTrfase"/>
</dbReference>
<dbReference type="InterPro" id="IPR013123">
    <property type="entry name" value="SpoU_subst-bd"/>
</dbReference>
<dbReference type="InterPro" id="IPR029026">
    <property type="entry name" value="tRNA_m1G_MTases_N"/>
</dbReference>
<dbReference type="NCBIfam" id="TIGR00186">
    <property type="entry name" value="rRNA_methyl_3"/>
    <property type="match status" value="1"/>
</dbReference>
<dbReference type="PANTHER" id="PTHR46429">
    <property type="entry name" value="23S RRNA (GUANOSINE-2'-O-)-METHYLTRANSFERASE RLMB"/>
    <property type="match status" value="1"/>
</dbReference>
<dbReference type="PANTHER" id="PTHR46429:SF1">
    <property type="entry name" value="23S RRNA (GUANOSINE-2'-O-)-METHYLTRANSFERASE RLMB"/>
    <property type="match status" value="1"/>
</dbReference>
<dbReference type="Pfam" id="PF00588">
    <property type="entry name" value="SpoU_methylase"/>
    <property type="match status" value="1"/>
</dbReference>
<dbReference type="Pfam" id="PF08032">
    <property type="entry name" value="SpoU_sub_bind"/>
    <property type="match status" value="1"/>
</dbReference>
<dbReference type="SMART" id="SM00967">
    <property type="entry name" value="SpoU_sub_bind"/>
    <property type="match status" value="1"/>
</dbReference>
<dbReference type="SUPFAM" id="SSF75217">
    <property type="entry name" value="alpha/beta knot"/>
    <property type="match status" value="1"/>
</dbReference>
<dbReference type="SUPFAM" id="SSF55315">
    <property type="entry name" value="L30e-like"/>
    <property type="match status" value="1"/>
</dbReference>
<gene>
    <name evidence="1" type="primary">rlmB</name>
    <name type="ordered locus">NE0351</name>
</gene>
<name>RLMB_NITEU</name>
<sequence length="260" mass="28304">MTHSQYIFGFHAITSRLRQHPDSIKEIYLDTNRHDQRARDLMSLAETTSTRLILCEQDRLCKMTGTTRHQGVAAHVTKLRRYATLEDLLEGLTEPALLLVLDGVKDPHNLGACLRVADAFGVHAVVVPKDRAVGLSATVHKVASGAVDTVPFFAVTNLARTLRELKEMGLWIVGTAADAPDTLDSVTLTRPLAWVLGAEDGGMRRLTREACDLLVSIPMSGSIESLNVSVSAGICLFETFRQHSQRTGSGLNVPAPKNAV</sequence>
<proteinExistence type="inferred from homology"/>
<organism>
    <name type="scientific">Nitrosomonas europaea (strain ATCC 19718 / CIP 103999 / KCTC 2705 / NBRC 14298)</name>
    <dbReference type="NCBI Taxonomy" id="228410"/>
    <lineage>
        <taxon>Bacteria</taxon>
        <taxon>Pseudomonadati</taxon>
        <taxon>Pseudomonadota</taxon>
        <taxon>Betaproteobacteria</taxon>
        <taxon>Nitrosomonadales</taxon>
        <taxon>Nitrosomonadaceae</taxon>
        <taxon>Nitrosomonas</taxon>
    </lineage>
</organism>
<evidence type="ECO:0000255" key="1">
    <source>
        <dbReference type="HAMAP-Rule" id="MF_01887"/>
    </source>
</evidence>
<feature type="chain" id="PRO_0000159793" description="23S rRNA (guanosine-2'-O-)-methyltransferase RlmB">
    <location>
        <begin position="1"/>
        <end position="260"/>
    </location>
</feature>
<feature type="binding site" evidence="1">
    <location>
        <position position="197"/>
    </location>
    <ligand>
        <name>S-adenosyl-L-methionine</name>
        <dbReference type="ChEBI" id="CHEBI:59789"/>
    </ligand>
</feature>
<feature type="binding site" evidence="1">
    <location>
        <position position="217"/>
    </location>
    <ligand>
        <name>S-adenosyl-L-methionine</name>
        <dbReference type="ChEBI" id="CHEBI:59789"/>
    </ligand>
</feature>
<feature type="binding site" evidence="1">
    <location>
        <position position="226"/>
    </location>
    <ligand>
        <name>S-adenosyl-L-methionine</name>
        <dbReference type="ChEBI" id="CHEBI:59789"/>
    </ligand>
</feature>
<accession>Q82XD1</accession>
<comment type="function">
    <text evidence="1">Specifically methylates the ribose of guanosine 2251 in 23S rRNA.</text>
</comment>
<comment type="catalytic activity">
    <reaction evidence="1">
        <text>guanosine(2251) in 23S rRNA + S-adenosyl-L-methionine = 2'-O-methylguanosine(2251) in 23S rRNA + S-adenosyl-L-homocysteine + H(+)</text>
        <dbReference type="Rhea" id="RHEA:24140"/>
        <dbReference type="Rhea" id="RHEA-COMP:10239"/>
        <dbReference type="Rhea" id="RHEA-COMP:10241"/>
        <dbReference type="ChEBI" id="CHEBI:15378"/>
        <dbReference type="ChEBI" id="CHEBI:57856"/>
        <dbReference type="ChEBI" id="CHEBI:59789"/>
        <dbReference type="ChEBI" id="CHEBI:74269"/>
        <dbReference type="ChEBI" id="CHEBI:74445"/>
        <dbReference type="EC" id="2.1.1.185"/>
    </reaction>
</comment>
<comment type="subcellular location">
    <subcellularLocation>
        <location evidence="1">Cytoplasm</location>
    </subcellularLocation>
</comment>
<comment type="similarity">
    <text evidence="1">Belongs to the class IV-like SAM-binding methyltransferase superfamily. RNA methyltransferase TrmH family. RlmB subfamily.</text>
</comment>